<gene>
    <name evidence="1" type="primary">rpmD</name>
    <name type="ordered locus">BCE_0128</name>
</gene>
<feature type="chain" id="PRO_0000273741" description="Large ribosomal subunit protein uL30">
    <location>
        <begin position="1"/>
        <end position="60"/>
    </location>
</feature>
<organism>
    <name type="scientific">Bacillus cereus (strain ATCC 10987 / NRS 248)</name>
    <dbReference type="NCBI Taxonomy" id="222523"/>
    <lineage>
        <taxon>Bacteria</taxon>
        <taxon>Bacillati</taxon>
        <taxon>Bacillota</taxon>
        <taxon>Bacilli</taxon>
        <taxon>Bacillales</taxon>
        <taxon>Bacillaceae</taxon>
        <taxon>Bacillus</taxon>
        <taxon>Bacillus cereus group</taxon>
    </lineage>
</organism>
<reference key="1">
    <citation type="journal article" date="2004" name="Nucleic Acids Res.">
        <title>The genome sequence of Bacillus cereus ATCC 10987 reveals metabolic adaptations and a large plasmid related to Bacillus anthracis pXO1.</title>
        <authorList>
            <person name="Rasko D.A."/>
            <person name="Ravel J."/>
            <person name="Oekstad O.A."/>
            <person name="Helgason E."/>
            <person name="Cer R.Z."/>
            <person name="Jiang L."/>
            <person name="Shores K.A."/>
            <person name="Fouts D.E."/>
            <person name="Tourasse N.J."/>
            <person name="Angiuoli S.V."/>
            <person name="Kolonay J.F."/>
            <person name="Nelson W.C."/>
            <person name="Kolstoe A.-B."/>
            <person name="Fraser C.M."/>
            <person name="Read T.D."/>
        </authorList>
    </citation>
    <scope>NUCLEOTIDE SEQUENCE [LARGE SCALE GENOMIC DNA]</scope>
    <source>
        <strain>ATCC 10987 / NRS 248</strain>
    </source>
</reference>
<protein>
    <recommendedName>
        <fullName evidence="1">Large ribosomal subunit protein uL30</fullName>
    </recommendedName>
    <alternativeName>
        <fullName evidence="2">50S ribosomal protein L30</fullName>
    </alternativeName>
</protein>
<name>RL30_BACC1</name>
<sequence length="60" mass="6556">MAKKLEITLTRSVIGRPQDQRATVEALGLKKLNSTVVKEETPAILGMINKVSHLVTVKEA</sequence>
<dbReference type="EMBL" id="AE017194">
    <property type="protein sequence ID" value="AAS39064.1"/>
    <property type="molecule type" value="Genomic_DNA"/>
</dbReference>
<dbReference type="SMR" id="Q73F78"/>
<dbReference type="KEGG" id="bca:BCE_0128"/>
<dbReference type="HOGENOM" id="CLU_131047_2_1_9"/>
<dbReference type="Proteomes" id="UP000002527">
    <property type="component" value="Chromosome"/>
</dbReference>
<dbReference type="GO" id="GO:0022625">
    <property type="term" value="C:cytosolic large ribosomal subunit"/>
    <property type="evidence" value="ECO:0007669"/>
    <property type="project" value="TreeGrafter"/>
</dbReference>
<dbReference type="GO" id="GO:0003735">
    <property type="term" value="F:structural constituent of ribosome"/>
    <property type="evidence" value="ECO:0007669"/>
    <property type="project" value="InterPro"/>
</dbReference>
<dbReference type="GO" id="GO:0006412">
    <property type="term" value="P:translation"/>
    <property type="evidence" value="ECO:0007669"/>
    <property type="project" value="UniProtKB-UniRule"/>
</dbReference>
<dbReference type="CDD" id="cd01658">
    <property type="entry name" value="Ribosomal_L30"/>
    <property type="match status" value="1"/>
</dbReference>
<dbReference type="FunFam" id="3.30.1390.20:FF:000001">
    <property type="entry name" value="50S ribosomal protein L30"/>
    <property type="match status" value="1"/>
</dbReference>
<dbReference type="Gene3D" id="3.30.1390.20">
    <property type="entry name" value="Ribosomal protein L30, ferredoxin-like fold domain"/>
    <property type="match status" value="1"/>
</dbReference>
<dbReference type="HAMAP" id="MF_01371_B">
    <property type="entry name" value="Ribosomal_uL30_B"/>
    <property type="match status" value="1"/>
</dbReference>
<dbReference type="InterPro" id="IPR036919">
    <property type="entry name" value="Ribo_uL30_ferredoxin-like_sf"/>
</dbReference>
<dbReference type="InterPro" id="IPR005996">
    <property type="entry name" value="Ribosomal_uL30_bac-type"/>
</dbReference>
<dbReference type="InterPro" id="IPR018038">
    <property type="entry name" value="Ribosomal_uL30_CS"/>
</dbReference>
<dbReference type="InterPro" id="IPR016082">
    <property type="entry name" value="Ribosomal_uL30_ferredoxin-like"/>
</dbReference>
<dbReference type="NCBIfam" id="TIGR01308">
    <property type="entry name" value="rpmD_bact"/>
    <property type="match status" value="1"/>
</dbReference>
<dbReference type="PANTHER" id="PTHR15892:SF2">
    <property type="entry name" value="LARGE RIBOSOMAL SUBUNIT PROTEIN UL30M"/>
    <property type="match status" value="1"/>
</dbReference>
<dbReference type="PANTHER" id="PTHR15892">
    <property type="entry name" value="MITOCHONDRIAL RIBOSOMAL PROTEIN L30"/>
    <property type="match status" value="1"/>
</dbReference>
<dbReference type="Pfam" id="PF00327">
    <property type="entry name" value="Ribosomal_L30"/>
    <property type="match status" value="1"/>
</dbReference>
<dbReference type="PIRSF" id="PIRSF002211">
    <property type="entry name" value="Ribosomal_L30_bac-type"/>
    <property type="match status" value="1"/>
</dbReference>
<dbReference type="SUPFAM" id="SSF55129">
    <property type="entry name" value="Ribosomal protein L30p/L7e"/>
    <property type="match status" value="1"/>
</dbReference>
<dbReference type="PROSITE" id="PS00634">
    <property type="entry name" value="RIBOSOMAL_L30"/>
    <property type="match status" value="1"/>
</dbReference>
<comment type="subunit">
    <text evidence="1">Part of the 50S ribosomal subunit.</text>
</comment>
<comment type="similarity">
    <text evidence="1">Belongs to the universal ribosomal protein uL30 family.</text>
</comment>
<keyword id="KW-0687">Ribonucleoprotein</keyword>
<keyword id="KW-0689">Ribosomal protein</keyword>
<proteinExistence type="inferred from homology"/>
<accession>Q73F78</accession>
<evidence type="ECO:0000255" key="1">
    <source>
        <dbReference type="HAMAP-Rule" id="MF_01371"/>
    </source>
</evidence>
<evidence type="ECO:0000305" key="2"/>